<organism>
    <name type="scientific">Burkholderia pseudomallei (strain 1106a)</name>
    <dbReference type="NCBI Taxonomy" id="357348"/>
    <lineage>
        <taxon>Bacteria</taxon>
        <taxon>Pseudomonadati</taxon>
        <taxon>Pseudomonadota</taxon>
        <taxon>Betaproteobacteria</taxon>
        <taxon>Burkholderiales</taxon>
        <taxon>Burkholderiaceae</taxon>
        <taxon>Burkholderia</taxon>
        <taxon>pseudomallei group</taxon>
    </lineage>
</organism>
<accession>A3P0A7</accession>
<evidence type="ECO:0000255" key="1">
    <source>
        <dbReference type="HAMAP-Rule" id="MF_01309"/>
    </source>
</evidence>
<evidence type="ECO:0000256" key="2">
    <source>
        <dbReference type="SAM" id="MobiDB-lite"/>
    </source>
</evidence>
<evidence type="ECO:0000305" key="3"/>
<sequence>MGQKIHPTGFRLAVSRNWASRWYANNNNFAAMLQEDIGVREYLKKKLKNASVGRVVIERPAKNARITIFSSRPGVVIGKKGEDIELLKTELQRRMGVPVHVNIEEIRKPETDAQLIADSITQQLERRIMFRRAMKRAMQNAMRLGAQGIKIMSAGRLNGIEIARTEWYREGRVPLHTLRADIDYATSEAKTTYGIIGVKVWVYKGDTLGRNDAPVVEEVTEDKRPRRNARPGDRRPRRDGEGGAPGARRGGPRRGAGKPEDGKTGE</sequence>
<name>RS3_BURP0</name>
<keyword id="KW-0687">Ribonucleoprotein</keyword>
<keyword id="KW-0689">Ribosomal protein</keyword>
<keyword id="KW-0694">RNA-binding</keyword>
<keyword id="KW-0699">rRNA-binding</keyword>
<proteinExistence type="inferred from homology"/>
<reference key="1">
    <citation type="journal article" date="2010" name="Genome Biol. Evol.">
        <title>Continuing evolution of Burkholderia mallei through genome reduction and large-scale rearrangements.</title>
        <authorList>
            <person name="Losada L."/>
            <person name="Ronning C.M."/>
            <person name="DeShazer D."/>
            <person name="Woods D."/>
            <person name="Fedorova N."/>
            <person name="Kim H.S."/>
            <person name="Shabalina S.A."/>
            <person name="Pearson T.R."/>
            <person name="Brinkac L."/>
            <person name="Tan P."/>
            <person name="Nandi T."/>
            <person name="Crabtree J."/>
            <person name="Badger J."/>
            <person name="Beckstrom-Sternberg S."/>
            <person name="Saqib M."/>
            <person name="Schutzer S.E."/>
            <person name="Keim P."/>
            <person name="Nierman W.C."/>
        </authorList>
    </citation>
    <scope>NUCLEOTIDE SEQUENCE [LARGE SCALE GENOMIC DNA]</scope>
    <source>
        <strain>1106a</strain>
    </source>
</reference>
<gene>
    <name evidence="1" type="primary">rpsC</name>
    <name type="ordered locus">BURPS1106A_3798</name>
</gene>
<protein>
    <recommendedName>
        <fullName evidence="1">Small ribosomal subunit protein uS3</fullName>
    </recommendedName>
    <alternativeName>
        <fullName evidence="3">30S ribosomal protein S3</fullName>
    </alternativeName>
</protein>
<feature type="chain" id="PRO_0000293765" description="Small ribosomal subunit protein uS3">
    <location>
        <begin position="1"/>
        <end position="266"/>
    </location>
</feature>
<feature type="domain" description="KH type-2" evidence="1">
    <location>
        <begin position="39"/>
        <end position="107"/>
    </location>
</feature>
<feature type="region of interest" description="Disordered" evidence="2">
    <location>
        <begin position="214"/>
        <end position="266"/>
    </location>
</feature>
<feature type="compositionally biased region" description="Basic and acidic residues" evidence="2">
    <location>
        <begin position="230"/>
        <end position="241"/>
    </location>
</feature>
<feature type="compositionally biased region" description="Basic and acidic residues" evidence="2">
    <location>
        <begin position="257"/>
        <end position="266"/>
    </location>
</feature>
<dbReference type="EMBL" id="CP000572">
    <property type="protein sequence ID" value="ABN89749.1"/>
    <property type="molecule type" value="Genomic_DNA"/>
</dbReference>
<dbReference type="RefSeq" id="WP_004185240.1">
    <property type="nucleotide sequence ID" value="NC_009076.1"/>
</dbReference>
<dbReference type="SMR" id="A3P0A7"/>
<dbReference type="GeneID" id="93061826"/>
<dbReference type="KEGG" id="bpl:BURPS1106A_3798"/>
<dbReference type="HOGENOM" id="CLU_058591_0_2_4"/>
<dbReference type="Proteomes" id="UP000006738">
    <property type="component" value="Chromosome I"/>
</dbReference>
<dbReference type="GO" id="GO:0022627">
    <property type="term" value="C:cytosolic small ribosomal subunit"/>
    <property type="evidence" value="ECO:0007669"/>
    <property type="project" value="TreeGrafter"/>
</dbReference>
<dbReference type="GO" id="GO:0003729">
    <property type="term" value="F:mRNA binding"/>
    <property type="evidence" value="ECO:0007669"/>
    <property type="project" value="UniProtKB-UniRule"/>
</dbReference>
<dbReference type="GO" id="GO:0019843">
    <property type="term" value="F:rRNA binding"/>
    <property type="evidence" value="ECO:0007669"/>
    <property type="project" value="UniProtKB-UniRule"/>
</dbReference>
<dbReference type="GO" id="GO:0003735">
    <property type="term" value="F:structural constituent of ribosome"/>
    <property type="evidence" value="ECO:0007669"/>
    <property type="project" value="InterPro"/>
</dbReference>
<dbReference type="GO" id="GO:0006412">
    <property type="term" value="P:translation"/>
    <property type="evidence" value="ECO:0007669"/>
    <property type="project" value="UniProtKB-UniRule"/>
</dbReference>
<dbReference type="CDD" id="cd02412">
    <property type="entry name" value="KH-II_30S_S3"/>
    <property type="match status" value="1"/>
</dbReference>
<dbReference type="FunFam" id="3.30.1140.32:FF:000006">
    <property type="entry name" value="30S ribosomal protein S3"/>
    <property type="match status" value="1"/>
</dbReference>
<dbReference type="FunFam" id="3.30.300.20:FF:000001">
    <property type="entry name" value="30S ribosomal protein S3"/>
    <property type="match status" value="1"/>
</dbReference>
<dbReference type="Gene3D" id="3.30.300.20">
    <property type="match status" value="1"/>
</dbReference>
<dbReference type="Gene3D" id="3.30.1140.32">
    <property type="entry name" value="Ribosomal protein S3, C-terminal domain"/>
    <property type="match status" value="1"/>
</dbReference>
<dbReference type="HAMAP" id="MF_01309_B">
    <property type="entry name" value="Ribosomal_uS3_B"/>
    <property type="match status" value="1"/>
</dbReference>
<dbReference type="InterPro" id="IPR004087">
    <property type="entry name" value="KH_dom"/>
</dbReference>
<dbReference type="InterPro" id="IPR015946">
    <property type="entry name" value="KH_dom-like_a/b"/>
</dbReference>
<dbReference type="InterPro" id="IPR004044">
    <property type="entry name" value="KH_dom_type_2"/>
</dbReference>
<dbReference type="InterPro" id="IPR009019">
    <property type="entry name" value="KH_sf_prok-type"/>
</dbReference>
<dbReference type="InterPro" id="IPR036419">
    <property type="entry name" value="Ribosomal_S3_C_sf"/>
</dbReference>
<dbReference type="InterPro" id="IPR005704">
    <property type="entry name" value="Ribosomal_uS3_bac-typ"/>
</dbReference>
<dbReference type="InterPro" id="IPR001351">
    <property type="entry name" value="Ribosomal_uS3_C"/>
</dbReference>
<dbReference type="InterPro" id="IPR018280">
    <property type="entry name" value="Ribosomal_uS3_CS"/>
</dbReference>
<dbReference type="NCBIfam" id="TIGR01009">
    <property type="entry name" value="rpsC_bact"/>
    <property type="match status" value="1"/>
</dbReference>
<dbReference type="PANTHER" id="PTHR11760">
    <property type="entry name" value="30S/40S RIBOSOMAL PROTEIN S3"/>
    <property type="match status" value="1"/>
</dbReference>
<dbReference type="PANTHER" id="PTHR11760:SF19">
    <property type="entry name" value="SMALL RIBOSOMAL SUBUNIT PROTEIN US3C"/>
    <property type="match status" value="1"/>
</dbReference>
<dbReference type="Pfam" id="PF07650">
    <property type="entry name" value="KH_2"/>
    <property type="match status" value="1"/>
</dbReference>
<dbReference type="Pfam" id="PF00189">
    <property type="entry name" value="Ribosomal_S3_C"/>
    <property type="match status" value="1"/>
</dbReference>
<dbReference type="SMART" id="SM00322">
    <property type="entry name" value="KH"/>
    <property type="match status" value="1"/>
</dbReference>
<dbReference type="SUPFAM" id="SSF54814">
    <property type="entry name" value="Prokaryotic type KH domain (KH-domain type II)"/>
    <property type="match status" value="1"/>
</dbReference>
<dbReference type="SUPFAM" id="SSF54821">
    <property type="entry name" value="Ribosomal protein S3 C-terminal domain"/>
    <property type="match status" value="1"/>
</dbReference>
<dbReference type="PROSITE" id="PS50823">
    <property type="entry name" value="KH_TYPE_2"/>
    <property type="match status" value="1"/>
</dbReference>
<dbReference type="PROSITE" id="PS00548">
    <property type="entry name" value="RIBOSOMAL_S3"/>
    <property type="match status" value="1"/>
</dbReference>
<comment type="function">
    <text evidence="1">Binds the lower part of the 30S subunit head. Binds mRNA in the 70S ribosome, positioning it for translation.</text>
</comment>
<comment type="subunit">
    <text evidence="1">Part of the 30S ribosomal subunit. Forms a tight complex with proteins S10 and S14.</text>
</comment>
<comment type="similarity">
    <text evidence="1">Belongs to the universal ribosomal protein uS3 family.</text>
</comment>